<dbReference type="EC" id="2.6.1.83" evidence="1"/>
<dbReference type="EMBL" id="CP000095">
    <property type="protein sequence ID" value="AAZ58556.1"/>
    <property type="molecule type" value="Genomic_DNA"/>
</dbReference>
<dbReference type="RefSeq" id="WP_011295411.1">
    <property type="nucleotide sequence ID" value="NC_007335.2"/>
</dbReference>
<dbReference type="SMR" id="Q46IX2"/>
<dbReference type="STRING" id="59920.PMN2A_1066"/>
<dbReference type="KEGG" id="pmn:PMN2A_1066"/>
<dbReference type="HOGENOM" id="CLU_051433_0_0_3"/>
<dbReference type="OrthoDB" id="9802328at2"/>
<dbReference type="PhylomeDB" id="Q46IX2"/>
<dbReference type="UniPathway" id="UPA00034">
    <property type="reaction ID" value="UER00466"/>
</dbReference>
<dbReference type="Proteomes" id="UP000002535">
    <property type="component" value="Chromosome"/>
</dbReference>
<dbReference type="GO" id="GO:0010285">
    <property type="term" value="F:L,L-diaminopimelate aminotransferase activity"/>
    <property type="evidence" value="ECO:0007669"/>
    <property type="project" value="UniProtKB-UniRule"/>
</dbReference>
<dbReference type="GO" id="GO:0030170">
    <property type="term" value="F:pyridoxal phosphate binding"/>
    <property type="evidence" value="ECO:0007669"/>
    <property type="project" value="UniProtKB-UniRule"/>
</dbReference>
<dbReference type="GO" id="GO:0033362">
    <property type="term" value="P:lysine biosynthetic process via diaminopimelate, diaminopimelate-aminotransferase pathway"/>
    <property type="evidence" value="ECO:0007669"/>
    <property type="project" value="UniProtKB-UniRule"/>
</dbReference>
<dbReference type="CDD" id="cd00609">
    <property type="entry name" value="AAT_like"/>
    <property type="match status" value="1"/>
</dbReference>
<dbReference type="FunFam" id="3.40.640.10:FF:000099">
    <property type="entry name" value="LL-diaminopimelate aminotransferase, chloroplastic"/>
    <property type="match status" value="1"/>
</dbReference>
<dbReference type="Gene3D" id="3.90.1150.10">
    <property type="entry name" value="Aspartate Aminotransferase, domain 1"/>
    <property type="match status" value="1"/>
</dbReference>
<dbReference type="Gene3D" id="3.40.640.10">
    <property type="entry name" value="Type I PLP-dependent aspartate aminotransferase-like (Major domain)"/>
    <property type="match status" value="1"/>
</dbReference>
<dbReference type="HAMAP" id="MF_01642">
    <property type="entry name" value="DapL_aminotrans_1"/>
    <property type="match status" value="1"/>
</dbReference>
<dbReference type="InterPro" id="IPR004839">
    <property type="entry name" value="Aminotransferase_I/II_large"/>
</dbReference>
<dbReference type="InterPro" id="IPR019942">
    <property type="entry name" value="DapL/ALD1"/>
</dbReference>
<dbReference type="InterPro" id="IPR015424">
    <property type="entry name" value="PyrdxlP-dep_Trfase"/>
</dbReference>
<dbReference type="InterPro" id="IPR015421">
    <property type="entry name" value="PyrdxlP-dep_Trfase_major"/>
</dbReference>
<dbReference type="InterPro" id="IPR015422">
    <property type="entry name" value="PyrdxlP-dep_Trfase_small"/>
</dbReference>
<dbReference type="NCBIfam" id="TIGR03542">
    <property type="entry name" value="DAPAT_plant"/>
    <property type="match status" value="1"/>
</dbReference>
<dbReference type="PANTHER" id="PTHR43144">
    <property type="entry name" value="AMINOTRANSFERASE"/>
    <property type="match status" value="1"/>
</dbReference>
<dbReference type="Pfam" id="PF00155">
    <property type="entry name" value="Aminotran_1_2"/>
    <property type="match status" value="1"/>
</dbReference>
<dbReference type="SUPFAM" id="SSF53383">
    <property type="entry name" value="PLP-dependent transferases"/>
    <property type="match status" value="1"/>
</dbReference>
<proteinExistence type="inferred from homology"/>
<protein>
    <recommendedName>
        <fullName evidence="1">LL-diaminopimelate aminotransferase</fullName>
        <shortName evidence="1">DAP-AT</shortName>
        <shortName evidence="1">DAP-aminotransferase</shortName>
        <shortName evidence="1">LL-DAP-aminotransferase</shortName>
        <ecNumber evidence="1">2.6.1.83</ecNumber>
    </recommendedName>
</protein>
<organism>
    <name type="scientific">Prochlorococcus marinus (strain NATL2A)</name>
    <dbReference type="NCBI Taxonomy" id="59920"/>
    <lineage>
        <taxon>Bacteria</taxon>
        <taxon>Bacillati</taxon>
        <taxon>Cyanobacteriota</taxon>
        <taxon>Cyanophyceae</taxon>
        <taxon>Synechococcales</taxon>
        <taxon>Prochlorococcaceae</taxon>
        <taxon>Prochlorococcus</taxon>
    </lineage>
</organism>
<reference key="1">
    <citation type="journal article" date="2007" name="PLoS Genet.">
        <title>Patterns and implications of gene gain and loss in the evolution of Prochlorococcus.</title>
        <authorList>
            <person name="Kettler G.C."/>
            <person name="Martiny A.C."/>
            <person name="Huang K."/>
            <person name="Zucker J."/>
            <person name="Coleman M.L."/>
            <person name="Rodrigue S."/>
            <person name="Chen F."/>
            <person name="Lapidus A."/>
            <person name="Ferriera S."/>
            <person name="Johnson J."/>
            <person name="Steglich C."/>
            <person name="Church G.M."/>
            <person name="Richardson P."/>
            <person name="Chisholm S.W."/>
        </authorList>
    </citation>
    <scope>NUCLEOTIDE SEQUENCE [LARGE SCALE GENOMIC DNA]</scope>
    <source>
        <strain>NATL2A</strain>
    </source>
</reference>
<accession>Q46IX2</accession>
<gene>
    <name evidence="1" type="primary">dapL</name>
    <name type="ordered locus">PMN2A_1066</name>
</gene>
<name>DAPAT_PROMT</name>
<keyword id="KW-0032">Aminotransferase</keyword>
<keyword id="KW-0663">Pyridoxal phosphate</keyword>
<keyword id="KW-1185">Reference proteome</keyword>
<keyword id="KW-0808">Transferase</keyword>
<sequence>MVKVNADYLKLKAGYLFPEISRRITEFSSKNPNADLIRLGIGDVTEPLPLACREAMKAAIEEMGTKDGFRGYGPEQGYKWLREIISENDYISRGCEISAEEIFVSDGSKCDSSNILDILGKENKIAVTDPVYPVYVDTNVMTGRTGEANSVGEYKGLSYIPINSENGFEASIPKDKFDLIYLCFPNNPTGAVATKEQLVSWVKYAKENNSLILFDAAYEAFIKDESIPHSIFEIEGARDCAIEFRSFSKNAGFTGTRCAFTVIPKSLKGKAGIETVDLWSLWNRRQSTKFNGVSYVVQRGAEAVYSKEGKTQIKKLVSFYMDNAEIIKSNLTAAGFEVFGAVNAPYAWIKTPKDMSSWDFFDFLLEKANVVGTPGSGFGAAGEGYFRLSAFNSRENVEKAMQRIVKLK</sequence>
<feature type="chain" id="PRO_0000312541" description="LL-diaminopimelate aminotransferase">
    <location>
        <begin position="1"/>
        <end position="408"/>
    </location>
</feature>
<feature type="binding site" evidence="1">
    <location>
        <position position="15"/>
    </location>
    <ligand>
        <name>substrate</name>
    </ligand>
</feature>
<feature type="binding site" evidence="1">
    <location>
        <position position="42"/>
    </location>
    <ligand>
        <name>substrate</name>
    </ligand>
</feature>
<feature type="binding site" evidence="1">
    <location>
        <position position="72"/>
    </location>
    <ligand>
        <name>pyridoxal 5'-phosphate</name>
        <dbReference type="ChEBI" id="CHEBI:597326"/>
    </ligand>
</feature>
<feature type="binding site" evidence="1">
    <location>
        <begin position="108"/>
        <end position="109"/>
    </location>
    <ligand>
        <name>pyridoxal 5'-phosphate</name>
        <dbReference type="ChEBI" id="CHEBI:597326"/>
    </ligand>
</feature>
<feature type="binding site" evidence="1">
    <location>
        <position position="109"/>
    </location>
    <ligand>
        <name>substrate</name>
    </ligand>
</feature>
<feature type="binding site" evidence="1">
    <location>
        <position position="132"/>
    </location>
    <ligand>
        <name>pyridoxal 5'-phosphate</name>
        <dbReference type="ChEBI" id="CHEBI:597326"/>
    </ligand>
</feature>
<feature type="binding site" evidence="1">
    <location>
        <position position="132"/>
    </location>
    <ligand>
        <name>substrate</name>
    </ligand>
</feature>
<feature type="binding site" evidence="1">
    <location>
        <position position="187"/>
    </location>
    <ligand>
        <name>pyridoxal 5'-phosphate</name>
        <dbReference type="ChEBI" id="CHEBI:597326"/>
    </ligand>
</feature>
<feature type="binding site" evidence="1">
    <location>
        <position position="187"/>
    </location>
    <ligand>
        <name>substrate</name>
    </ligand>
</feature>
<feature type="binding site" evidence="1">
    <location>
        <position position="218"/>
    </location>
    <ligand>
        <name>pyridoxal 5'-phosphate</name>
        <dbReference type="ChEBI" id="CHEBI:597326"/>
    </ligand>
</feature>
<feature type="binding site" evidence="1">
    <location>
        <begin position="246"/>
        <end position="248"/>
    </location>
    <ligand>
        <name>pyridoxal 5'-phosphate</name>
        <dbReference type="ChEBI" id="CHEBI:597326"/>
    </ligand>
</feature>
<feature type="binding site" evidence="1">
    <location>
        <position position="257"/>
    </location>
    <ligand>
        <name>pyridoxal 5'-phosphate</name>
        <dbReference type="ChEBI" id="CHEBI:597326"/>
    </ligand>
</feature>
<feature type="binding site" evidence="1">
    <location>
        <position position="291"/>
    </location>
    <ligand>
        <name>pyridoxal 5'-phosphate</name>
        <dbReference type="ChEBI" id="CHEBI:597326"/>
    </ligand>
</feature>
<feature type="binding site" evidence="1">
    <location>
        <position position="291"/>
    </location>
    <ligand>
        <name>substrate</name>
    </ligand>
</feature>
<feature type="binding site" evidence="1">
    <location>
        <position position="387"/>
    </location>
    <ligand>
        <name>substrate</name>
    </ligand>
</feature>
<feature type="modified residue" description="N6-(pyridoxal phosphate)lysine" evidence="1">
    <location>
        <position position="249"/>
    </location>
</feature>
<evidence type="ECO:0000255" key="1">
    <source>
        <dbReference type="HAMAP-Rule" id="MF_01642"/>
    </source>
</evidence>
<comment type="function">
    <text evidence="1">Involved in the synthesis of meso-diaminopimelate (m-DAP or DL-DAP), required for both lysine and peptidoglycan biosynthesis. Catalyzes the direct conversion of tetrahydrodipicolinate to LL-diaminopimelate.</text>
</comment>
<comment type="catalytic activity">
    <reaction evidence="1">
        <text>(2S,6S)-2,6-diaminopimelate + 2-oxoglutarate = (S)-2,3,4,5-tetrahydrodipicolinate + L-glutamate + H2O + H(+)</text>
        <dbReference type="Rhea" id="RHEA:23988"/>
        <dbReference type="ChEBI" id="CHEBI:15377"/>
        <dbReference type="ChEBI" id="CHEBI:15378"/>
        <dbReference type="ChEBI" id="CHEBI:16810"/>
        <dbReference type="ChEBI" id="CHEBI:16845"/>
        <dbReference type="ChEBI" id="CHEBI:29985"/>
        <dbReference type="ChEBI" id="CHEBI:57609"/>
        <dbReference type="EC" id="2.6.1.83"/>
    </reaction>
</comment>
<comment type="cofactor">
    <cofactor evidence="1">
        <name>pyridoxal 5'-phosphate</name>
        <dbReference type="ChEBI" id="CHEBI:597326"/>
    </cofactor>
</comment>
<comment type="pathway">
    <text evidence="1">Amino-acid biosynthesis; L-lysine biosynthesis via DAP pathway; LL-2,6-diaminopimelate from (S)-tetrahydrodipicolinate (aminotransferase route): step 1/1.</text>
</comment>
<comment type="subunit">
    <text evidence="1">Homodimer.</text>
</comment>
<comment type="similarity">
    <text evidence="1">Belongs to the class-I pyridoxal-phosphate-dependent aminotransferase family. LL-diaminopimelate aminotransferase subfamily.</text>
</comment>